<comment type="function">
    <text evidence="1">Involved in the binding of tRNA to the ribosomes.</text>
</comment>
<comment type="subunit">
    <text evidence="1">Part of the 30S ribosomal subunit.</text>
</comment>
<comment type="similarity">
    <text evidence="1">Belongs to the universal ribosomal protein uS10 family.</text>
</comment>
<sequence>MQNQRIRIRLKGFDHRLIDQSTAEIVETAKRTGAQVRGPIPLPTRKERYTVLISPHVNKDARDQYELRTHKRLVDIVEPTEKTVDALMRLDLAAGVDVQISLG</sequence>
<dbReference type="EMBL" id="CP000444">
    <property type="protein sequence ID" value="ABI41199.1"/>
    <property type="molecule type" value="Genomic_DNA"/>
</dbReference>
<dbReference type="SMR" id="Q0I0A6"/>
<dbReference type="KEGG" id="shm:Shewmr7_0193"/>
<dbReference type="HOGENOM" id="CLU_122625_1_3_6"/>
<dbReference type="GO" id="GO:1990904">
    <property type="term" value="C:ribonucleoprotein complex"/>
    <property type="evidence" value="ECO:0007669"/>
    <property type="project" value="UniProtKB-KW"/>
</dbReference>
<dbReference type="GO" id="GO:0005840">
    <property type="term" value="C:ribosome"/>
    <property type="evidence" value="ECO:0007669"/>
    <property type="project" value="UniProtKB-KW"/>
</dbReference>
<dbReference type="GO" id="GO:0003735">
    <property type="term" value="F:structural constituent of ribosome"/>
    <property type="evidence" value="ECO:0007669"/>
    <property type="project" value="InterPro"/>
</dbReference>
<dbReference type="GO" id="GO:0000049">
    <property type="term" value="F:tRNA binding"/>
    <property type="evidence" value="ECO:0007669"/>
    <property type="project" value="UniProtKB-UniRule"/>
</dbReference>
<dbReference type="GO" id="GO:0006412">
    <property type="term" value="P:translation"/>
    <property type="evidence" value="ECO:0007669"/>
    <property type="project" value="UniProtKB-UniRule"/>
</dbReference>
<dbReference type="FunFam" id="3.30.70.600:FF:000001">
    <property type="entry name" value="30S ribosomal protein S10"/>
    <property type="match status" value="1"/>
</dbReference>
<dbReference type="Gene3D" id="3.30.70.600">
    <property type="entry name" value="Ribosomal protein S10 domain"/>
    <property type="match status" value="1"/>
</dbReference>
<dbReference type="HAMAP" id="MF_00508">
    <property type="entry name" value="Ribosomal_uS10"/>
    <property type="match status" value="1"/>
</dbReference>
<dbReference type="InterPro" id="IPR001848">
    <property type="entry name" value="Ribosomal_uS10"/>
</dbReference>
<dbReference type="InterPro" id="IPR018268">
    <property type="entry name" value="Ribosomal_uS10_CS"/>
</dbReference>
<dbReference type="InterPro" id="IPR027486">
    <property type="entry name" value="Ribosomal_uS10_dom"/>
</dbReference>
<dbReference type="InterPro" id="IPR036838">
    <property type="entry name" value="Ribosomal_uS10_dom_sf"/>
</dbReference>
<dbReference type="NCBIfam" id="NF001861">
    <property type="entry name" value="PRK00596.1"/>
    <property type="match status" value="1"/>
</dbReference>
<dbReference type="NCBIfam" id="TIGR01049">
    <property type="entry name" value="rpsJ_bact"/>
    <property type="match status" value="1"/>
</dbReference>
<dbReference type="PANTHER" id="PTHR11700">
    <property type="entry name" value="30S RIBOSOMAL PROTEIN S10 FAMILY MEMBER"/>
    <property type="match status" value="1"/>
</dbReference>
<dbReference type="Pfam" id="PF00338">
    <property type="entry name" value="Ribosomal_S10"/>
    <property type="match status" value="1"/>
</dbReference>
<dbReference type="PRINTS" id="PR00971">
    <property type="entry name" value="RIBOSOMALS10"/>
</dbReference>
<dbReference type="SMART" id="SM01403">
    <property type="entry name" value="Ribosomal_S10"/>
    <property type="match status" value="1"/>
</dbReference>
<dbReference type="SUPFAM" id="SSF54999">
    <property type="entry name" value="Ribosomal protein S10"/>
    <property type="match status" value="1"/>
</dbReference>
<dbReference type="PROSITE" id="PS00361">
    <property type="entry name" value="RIBOSOMAL_S10"/>
    <property type="match status" value="1"/>
</dbReference>
<accession>Q0I0A6</accession>
<name>RS10_SHESR</name>
<keyword id="KW-0687">Ribonucleoprotein</keyword>
<keyword id="KW-0689">Ribosomal protein</keyword>
<gene>
    <name evidence="1" type="primary">rpsJ</name>
    <name type="ordered locus">Shewmr7_0193</name>
</gene>
<evidence type="ECO:0000255" key="1">
    <source>
        <dbReference type="HAMAP-Rule" id="MF_00508"/>
    </source>
</evidence>
<evidence type="ECO:0000305" key="2"/>
<feature type="chain" id="PRO_1000015115" description="Small ribosomal subunit protein uS10">
    <location>
        <begin position="1"/>
        <end position="103"/>
    </location>
</feature>
<proteinExistence type="inferred from homology"/>
<organism>
    <name type="scientific">Shewanella sp. (strain MR-7)</name>
    <dbReference type="NCBI Taxonomy" id="60481"/>
    <lineage>
        <taxon>Bacteria</taxon>
        <taxon>Pseudomonadati</taxon>
        <taxon>Pseudomonadota</taxon>
        <taxon>Gammaproteobacteria</taxon>
        <taxon>Alteromonadales</taxon>
        <taxon>Shewanellaceae</taxon>
        <taxon>Shewanella</taxon>
    </lineage>
</organism>
<reference key="1">
    <citation type="submission" date="2006-08" db="EMBL/GenBank/DDBJ databases">
        <title>Complete sequence of chromosome 1 of Shewanella sp. MR-7.</title>
        <authorList>
            <person name="Copeland A."/>
            <person name="Lucas S."/>
            <person name="Lapidus A."/>
            <person name="Barry K."/>
            <person name="Detter J.C."/>
            <person name="Glavina del Rio T."/>
            <person name="Hammon N."/>
            <person name="Israni S."/>
            <person name="Dalin E."/>
            <person name="Tice H."/>
            <person name="Pitluck S."/>
            <person name="Kiss H."/>
            <person name="Brettin T."/>
            <person name="Bruce D."/>
            <person name="Han C."/>
            <person name="Tapia R."/>
            <person name="Gilna P."/>
            <person name="Schmutz J."/>
            <person name="Larimer F."/>
            <person name="Land M."/>
            <person name="Hauser L."/>
            <person name="Kyrpides N."/>
            <person name="Mikhailova N."/>
            <person name="Nealson K."/>
            <person name="Konstantinidis K."/>
            <person name="Klappenbach J."/>
            <person name="Tiedje J."/>
            <person name="Richardson P."/>
        </authorList>
    </citation>
    <scope>NUCLEOTIDE SEQUENCE [LARGE SCALE GENOMIC DNA]</scope>
    <source>
        <strain>MR-7</strain>
    </source>
</reference>
<protein>
    <recommendedName>
        <fullName evidence="1">Small ribosomal subunit protein uS10</fullName>
    </recommendedName>
    <alternativeName>
        <fullName evidence="2">30S ribosomal protein S10</fullName>
    </alternativeName>
</protein>